<comment type="catalytic activity">
    <reaction evidence="1">
        <text>(S)-4-amino-5-oxopentanoate = 5-aminolevulinate</text>
        <dbReference type="Rhea" id="RHEA:14265"/>
        <dbReference type="ChEBI" id="CHEBI:57501"/>
        <dbReference type="ChEBI" id="CHEBI:356416"/>
        <dbReference type="EC" id="5.4.3.8"/>
    </reaction>
</comment>
<comment type="cofactor">
    <cofactor evidence="1">
        <name>pyridoxal 5'-phosphate</name>
        <dbReference type="ChEBI" id="CHEBI:597326"/>
    </cofactor>
</comment>
<comment type="pathway">
    <text evidence="1">Porphyrin-containing compound metabolism; protoporphyrin-IX biosynthesis; 5-aminolevulinate from L-glutamyl-tRNA(Glu): step 2/2.</text>
</comment>
<comment type="subunit">
    <text evidence="1">Homodimer.</text>
</comment>
<comment type="subcellular location">
    <subcellularLocation>
        <location evidence="1">Cytoplasm</location>
    </subcellularLocation>
</comment>
<comment type="similarity">
    <text evidence="1">Belongs to the class-III pyridoxal-phosphate-dependent aminotransferase family. HemL subfamily.</text>
</comment>
<sequence>MTHNTDLNLPLFERAKALIPGGVNSPVRAFRAVGGTPRFITRAQGAYMWDANGQRFIDYIGSWGPMILGHGHPAVLEAVQKAALEGFSFGAPTEREVELAEEIIRHVPSMEMIRLVSSGTEAGMSAIRLARGATRRNKIIKFNGCYHGHADSLLVKAGSGLATFGHATSAGVPQEVVQHTLVLEYNDVAQLEEAFTLHGPDVACVIMEPIAGNMNFVRASVPFMRRARELCTQHGALLVIDEVMTGFRVALGGAQSLYAQAIPGFKPDITVLGKVIGGGMPLAAFGGSRAVMEQLAPLGPVYQAGTLSGNPVATACGLATLREIAKPGFYDALGARTRALIDGLAGAASAAGVPFCGDTQGGMFGFFLLPQLPQNYPEVLNTDGMRFNTLFHGLLDGGVYIAPALYEAGFVSAAHTEQDIADTVAVARDVFQKL</sequence>
<evidence type="ECO:0000255" key="1">
    <source>
        <dbReference type="HAMAP-Rule" id="MF_00375"/>
    </source>
</evidence>
<name>GSA_ACIET</name>
<proteinExistence type="inferred from homology"/>
<feature type="chain" id="PRO_1000201017" description="Glutamate-1-semialdehyde 2,1-aminomutase">
    <location>
        <begin position="1"/>
        <end position="434"/>
    </location>
</feature>
<feature type="modified residue" description="N6-(pyridoxal phosphate)lysine" evidence="1">
    <location>
        <position position="274"/>
    </location>
</feature>
<organism>
    <name type="scientific">Acidovorax ebreus (strain TPSY)</name>
    <name type="common">Diaphorobacter sp. (strain TPSY)</name>
    <dbReference type="NCBI Taxonomy" id="535289"/>
    <lineage>
        <taxon>Bacteria</taxon>
        <taxon>Pseudomonadati</taxon>
        <taxon>Pseudomonadota</taxon>
        <taxon>Betaproteobacteria</taxon>
        <taxon>Burkholderiales</taxon>
        <taxon>Comamonadaceae</taxon>
        <taxon>Diaphorobacter</taxon>
    </lineage>
</organism>
<keyword id="KW-0963">Cytoplasm</keyword>
<keyword id="KW-0413">Isomerase</keyword>
<keyword id="KW-0627">Porphyrin biosynthesis</keyword>
<keyword id="KW-0663">Pyridoxal phosphate</keyword>
<keyword id="KW-1185">Reference proteome</keyword>
<protein>
    <recommendedName>
        <fullName evidence="1">Glutamate-1-semialdehyde 2,1-aminomutase</fullName>
        <shortName evidence="1">GSA</shortName>
        <ecNumber evidence="1">5.4.3.8</ecNumber>
    </recommendedName>
    <alternativeName>
        <fullName evidence="1">Glutamate-1-semialdehyde aminotransferase</fullName>
        <shortName evidence="1">GSA-AT</shortName>
    </alternativeName>
</protein>
<gene>
    <name evidence="1" type="primary">hemL</name>
    <name type="ordered locus">Dtpsy_2904</name>
</gene>
<accession>B9MF68</accession>
<dbReference type="EC" id="5.4.3.8" evidence="1"/>
<dbReference type="EMBL" id="CP001392">
    <property type="protein sequence ID" value="ACM34338.1"/>
    <property type="molecule type" value="Genomic_DNA"/>
</dbReference>
<dbReference type="RefSeq" id="WP_015914198.1">
    <property type="nucleotide sequence ID" value="NC_011992.1"/>
</dbReference>
<dbReference type="SMR" id="B9MF68"/>
<dbReference type="KEGG" id="dia:Dtpsy_2904"/>
<dbReference type="eggNOG" id="COG0001">
    <property type="taxonomic scope" value="Bacteria"/>
</dbReference>
<dbReference type="HOGENOM" id="CLU_016922_1_5_4"/>
<dbReference type="UniPathway" id="UPA00251">
    <property type="reaction ID" value="UER00317"/>
</dbReference>
<dbReference type="Proteomes" id="UP000000450">
    <property type="component" value="Chromosome"/>
</dbReference>
<dbReference type="GO" id="GO:0005737">
    <property type="term" value="C:cytoplasm"/>
    <property type="evidence" value="ECO:0007669"/>
    <property type="project" value="UniProtKB-SubCell"/>
</dbReference>
<dbReference type="GO" id="GO:0042286">
    <property type="term" value="F:glutamate-1-semialdehyde 2,1-aminomutase activity"/>
    <property type="evidence" value="ECO:0007669"/>
    <property type="project" value="UniProtKB-UniRule"/>
</dbReference>
<dbReference type="GO" id="GO:0030170">
    <property type="term" value="F:pyridoxal phosphate binding"/>
    <property type="evidence" value="ECO:0007669"/>
    <property type="project" value="InterPro"/>
</dbReference>
<dbReference type="GO" id="GO:0008483">
    <property type="term" value="F:transaminase activity"/>
    <property type="evidence" value="ECO:0007669"/>
    <property type="project" value="InterPro"/>
</dbReference>
<dbReference type="GO" id="GO:0006782">
    <property type="term" value="P:protoporphyrinogen IX biosynthetic process"/>
    <property type="evidence" value="ECO:0007669"/>
    <property type="project" value="UniProtKB-UniRule"/>
</dbReference>
<dbReference type="CDD" id="cd00610">
    <property type="entry name" value="OAT_like"/>
    <property type="match status" value="1"/>
</dbReference>
<dbReference type="FunFam" id="3.40.640.10:FF:000021">
    <property type="entry name" value="Glutamate-1-semialdehyde 2,1-aminomutase"/>
    <property type="match status" value="1"/>
</dbReference>
<dbReference type="Gene3D" id="3.90.1150.10">
    <property type="entry name" value="Aspartate Aminotransferase, domain 1"/>
    <property type="match status" value="1"/>
</dbReference>
<dbReference type="Gene3D" id="3.40.640.10">
    <property type="entry name" value="Type I PLP-dependent aspartate aminotransferase-like (Major domain)"/>
    <property type="match status" value="1"/>
</dbReference>
<dbReference type="HAMAP" id="MF_00375">
    <property type="entry name" value="HemL_aminotrans_3"/>
    <property type="match status" value="1"/>
</dbReference>
<dbReference type="InterPro" id="IPR004639">
    <property type="entry name" value="4pyrrol_synth_GluAld_NH2Trfase"/>
</dbReference>
<dbReference type="InterPro" id="IPR005814">
    <property type="entry name" value="Aminotrans_3"/>
</dbReference>
<dbReference type="InterPro" id="IPR015424">
    <property type="entry name" value="PyrdxlP-dep_Trfase"/>
</dbReference>
<dbReference type="InterPro" id="IPR015421">
    <property type="entry name" value="PyrdxlP-dep_Trfase_major"/>
</dbReference>
<dbReference type="InterPro" id="IPR015422">
    <property type="entry name" value="PyrdxlP-dep_Trfase_small"/>
</dbReference>
<dbReference type="NCBIfam" id="TIGR00713">
    <property type="entry name" value="hemL"/>
    <property type="match status" value="1"/>
</dbReference>
<dbReference type="NCBIfam" id="NF000818">
    <property type="entry name" value="PRK00062.1"/>
    <property type="match status" value="1"/>
</dbReference>
<dbReference type="PANTHER" id="PTHR43713">
    <property type="entry name" value="GLUTAMATE-1-SEMIALDEHYDE 2,1-AMINOMUTASE"/>
    <property type="match status" value="1"/>
</dbReference>
<dbReference type="PANTHER" id="PTHR43713:SF3">
    <property type="entry name" value="GLUTAMATE-1-SEMIALDEHYDE 2,1-AMINOMUTASE 1, CHLOROPLASTIC-RELATED"/>
    <property type="match status" value="1"/>
</dbReference>
<dbReference type="Pfam" id="PF00202">
    <property type="entry name" value="Aminotran_3"/>
    <property type="match status" value="1"/>
</dbReference>
<dbReference type="SUPFAM" id="SSF53383">
    <property type="entry name" value="PLP-dependent transferases"/>
    <property type="match status" value="1"/>
</dbReference>
<reference key="1">
    <citation type="submission" date="2009-01" db="EMBL/GenBank/DDBJ databases">
        <title>Complete sequence of Diaphorobacter sp. TPSY.</title>
        <authorList>
            <consortium name="US DOE Joint Genome Institute"/>
            <person name="Lucas S."/>
            <person name="Copeland A."/>
            <person name="Lapidus A."/>
            <person name="Glavina del Rio T."/>
            <person name="Tice H."/>
            <person name="Bruce D."/>
            <person name="Goodwin L."/>
            <person name="Pitluck S."/>
            <person name="Chertkov O."/>
            <person name="Brettin T."/>
            <person name="Detter J.C."/>
            <person name="Han C."/>
            <person name="Larimer F."/>
            <person name="Land M."/>
            <person name="Hauser L."/>
            <person name="Kyrpides N."/>
            <person name="Mikhailova N."/>
            <person name="Coates J.D."/>
        </authorList>
    </citation>
    <scope>NUCLEOTIDE SEQUENCE [LARGE SCALE GENOMIC DNA]</scope>
    <source>
        <strain>TPSY</strain>
    </source>
</reference>